<name>NUOD_MYCSJ</name>
<organism>
    <name type="scientific">Mycobacterium sp. (strain JLS)</name>
    <dbReference type="NCBI Taxonomy" id="164757"/>
    <lineage>
        <taxon>Bacteria</taxon>
        <taxon>Bacillati</taxon>
        <taxon>Actinomycetota</taxon>
        <taxon>Actinomycetes</taxon>
        <taxon>Mycobacteriales</taxon>
        <taxon>Mycobacteriaceae</taxon>
        <taxon>Mycobacterium</taxon>
    </lineage>
</organism>
<comment type="function">
    <text evidence="1">NDH-1 shuttles electrons from NADH, via FMN and iron-sulfur (Fe-S) centers, to quinones in the respiratory chain. The immediate electron acceptor for the enzyme in this species is believed to be a menaquinone. Couples the redox reaction to proton translocation (for every two electrons transferred, four hydrogen ions are translocated across the cytoplasmic membrane), and thus conserves the redox energy in a proton gradient.</text>
</comment>
<comment type="catalytic activity">
    <reaction evidence="1">
        <text>a quinone + NADH + 5 H(+)(in) = a quinol + NAD(+) + 4 H(+)(out)</text>
        <dbReference type="Rhea" id="RHEA:57888"/>
        <dbReference type="ChEBI" id="CHEBI:15378"/>
        <dbReference type="ChEBI" id="CHEBI:24646"/>
        <dbReference type="ChEBI" id="CHEBI:57540"/>
        <dbReference type="ChEBI" id="CHEBI:57945"/>
        <dbReference type="ChEBI" id="CHEBI:132124"/>
    </reaction>
</comment>
<comment type="subunit">
    <text evidence="1">NDH-1 is composed of 14 different subunits. Subunits NuoB, C, D, E, F, and G constitute the peripheral sector of the complex.</text>
</comment>
<comment type="subcellular location">
    <subcellularLocation>
        <location evidence="1">Cell membrane</location>
        <topology evidence="1">Peripheral membrane protein</topology>
        <orientation evidence="1">Cytoplasmic side</orientation>
    </subcellularLocation>
</comment>
<comment type="similarity">
    <text evidence="1">Belongs to the complex I 49 kDa subunit family.</text>
</comment>
<accession>A3PWR8</accession>
<gene>
    <name evidence="1" type="primary">nuoD</name>
    <name type="ordered locus">Mjls_1547</name>
</gene>
<protein>
    <recommendedName>
        <fullName evidence="1">NADH-quinone oxidoreductase subunit D</fullName>
        <ecNumber evidence="1">7.1.1.-</ecNumber>
    </recommendedName>
    <alternativeName>
        <fullName evidence="1">NADH dehydrogenase I subunit D</fullName>
    </alternativeName>
    <alternativeName>
        <fullName evidence="1">NDH-1 subunit D</fullName>
    </alternativeName>
</protein>
<proteinExistence type="inferred from homology"/>
<sequence length="446" mass="48693">MTTPPGPPNAGGDARTGTDTVIVVGGEDWEQVVAAAEQAQAGERIVVNMGPQHPSTHGVLRLILEIEGETITEARCGIGYLHTGIEKNLEYRNWTQGVTFVTRMDYLSPFFNETAYCLGVEKLLGVTDAIPERVNVIRVMLMELNRISSHLVALATGGMELGAMSAMFYGFREREEILSVFEMITGLRMNHAYIRPGGLAADLPDGAVPRIRELLALLPGRLRDLENLLNENYIWKARTQGIGYLDLAGCMALGITGPVLRSTGLPHDLRRAQPYCGYEDYEFDVITDDGCDAYGRYLIRVKEMRESLKIVEQCVDRLKPGPVMIADKKLAWPADLELGPDGLGNSPAHIARIMGQSMEGLIHHFKLVTEGIRVPAGQVYTAVESPRGELGVHMVSDGGTRPYRVHYRDPSFTNLQAVAAMCEGGMVADAISAVASIDPVMGGVDR</sequence>
<evidence type="ECO:0000255" key="1">
    <source>
        <dbReference type="HAMAP-Rule" id="MF_01358"/>
    </source>
</evidence>
<dbReference type="EC" id="7.1.1.-" evidence="1"/>
<dbReference type="EMBL" id="CP000580">
    <property type="protein sequence ID" value="ABN97345.1"/>
    <property type="molecule type" value="Genomic_DNA"/>
</dbReference>
<dbReference type="SMR" id="A3PWR8"/>
<dbReference type="KEGG" id="mjl:Mjls_1547"/>
<dbReference type="HOGENOM" id="CLU_015134_1_2_11"/>
<dbReference type="BioCyc" id="MSP164757:G1G8C-1564-MONOMER"/>
<dbReference type="GO" id="GO:0005886">
    <property type="term" value="C:plasma membrane"/>
    <property type="evidence" value="ECO:0007669"/>
    <property type="project" value="UniProtKB-SubCell"/>
</dbReference>
<dbReference type="GO" id="GO:0051287">
    <property type="term" value="F:NAD binding"/>
    <property type="evidence" value="ECO:0007669"/>
    <property type="project" value="InterPro"/>
</dbReference>
<dbReference type="GO" id="GO:0050136">
    <property type="term" value="F:NADH:ubiquinone reductase (non-electrogenic) activity"/>
    <property type="evidence" value="ECO:0007669"/>
    <property type="project" value="UniProtKB-UniRule"/>
</dbReference>
<dbReference type="GO" id="GO:0048038">
    <property type="term" value="F:quinone binding"/>
    <property type="evidence" value="ECO:0007669"/>
    <property type="project" value="UniProtKB-KW"/>
</dbReference>
<dbReference type="Gene3D" id="1.10.645.10">
    <property type="entry name" value="Cytochrome-c3 Hydrogenase, chain B"/>
    <property type="match status" value="1"/>
</dbReference>
<dbReference type="HAMAP" id="MF_01358">
    <property type="entry name" value="NDH1_NuoD"/>
    <property type="match status" value="1"/>
</dbReference>
<dbReference type="InterPro" id="IPR001135">
    <property type="entry name" value="NADH_Q_OxRdtase_suD"/>
</dbReference>
<dbReference type="InterPro" id="IPR014029">
    <property type="entry name" value="NADH_UbQ_OxRdtase_49kDa_CS"/>
</dbReference>
<dbReference type="InterPro" id="IPR022885">
    <property type="entry name" value="NDH1_su_D/H"/>
</dbReference>
<dbReference type="InterPro" id="IPR029014">
    <property type="entry name" value="NiFe-Hase_large"/>
</dbReference>
<dbReference type="NCBIfam" id="TIGR01962">
    <property type="entry name" value="NuoD"/>
    <property type="match status" value="1"/>
</dbReference>
<dbReference type="NCBIfam" id="NF004739">
    <property type="entry name" value="PRK06075.1"/>
    <property type="match status" value="1"/>
</dbReference>
<dbReference type="PANTHER" id="PTHR11993:SF10">
    <property type="entry name" value="NADH DEHYDROGENASE [UBIQUINONE] IRON-SULFUR PROTEIN 2, MITOCHONDRIAL"/>
    <property type="match status" value="1"/>
</dbReference>
<dbReference type="PANTHER" id="PTHR11993">
    <property type="entry name" value="NADH-UBIQUINONE OXIDOREDUCTASE 49 KDA SUBUNIT"/>
    <property type="match status" value="1"/>
</dbReference>
<dbReference type="Pfam" id="PF00346">
    <property type="entry name" value="Complex1_49kDa"/>
    <property type="match status" value="1"/>
</dbReference>
<dbReference type="SUPFAM" id="SSF56762">
    <property type="entry name" value="HydB/Nqo4-like"/>
    <property type="match status" value="1"/>
</dbReference>
<dbReference type="PROSITE" id="PS00535">
    <property type="entry name" value="COMPLEX1_49K"/>
    <property type="match status" value="1"/>
</dbReference>
<feature type="chain" id="PRO_0000357859" description="NADH-quinone oxidoreductase subunit D">
    <location>
        <begin position="1"/>
        <end position="446"/>
    </location>
</feature>
<keyword id="KW-1003">Cell membrane</keyword>
<keyword id="KW-0472">Membrane</keyword>
<keyword id="KW-0520">NAD</keyword>
<keyword id="KW-0874">Quinone</keyword>
<keyword id="KW-1278">Translocase</keyword>
<keyword id="KW-0813">Transport</keyword>
<reference key="1">
    <citation type="submission" date="2007-02" db="EMBL/GenBank/DDBJ databases">
        <title>Complete sequence of Mycobacterium sp. JLS.</title>
        <authorList>
            <consortium name="US DOE Joint Genome Institute"/>
            <person name="Copeland A."/>
            <person name="Lucas S."/>
            <person name="Lapidus A."/>
            <person name="Barry K."/>
            <person name="Detter J.C."/>
            <person name="Glavina del Rio T."/>
            <person name="Hammon N."/>
            <person name="Israni S."/>
            <person name="Dalin E."/>
            <person name="Tice H."/>
            <person name="Pitluck S."/>
            <person name="Chain P."/>
            <person name="Malfatti S."/>
            <person name="Shin M."/>
            <person name="Vergez L."/>
            <person name="Schmutz J."/>
            <person name="Larimer F."/>
            <person name="Land M."/>
            <person name="Hauser L."/>
            <person name="Kyrpides N."/>
            <person name="Mikhailova N."/>
            <person name="Miller C.D."/>
            <person name="Anderson A.J."/>
            <person name="Sims R.C."/>
            <person name="Richardson P."/>
        </authorList>
    </citation>
    <scope>NUCLEOTIDE SEQUENCE [LARGE SCALE GENOMIC DNA]</scope>
    <source>
        <strain>JLS</strain>
    </source>
</reference>